<gene>
    <name type="primary">Adam11</name>
    <name type="synonym">Mdc</name>
</gene>
<name>ADA11_MOUSE</name>
<protein>
    <recommendedName>
        <fullName>Disintegrin and metalloproteinase domain-containing protein 11</fullName>
        <shortName>ADAM 11</shortName>
    </recommendedName>
    <alternativeName>
        <fullName>Metalloproteinase-like, disintegrin-like, and cysteine-rich protein</fullName>
        <shortName>MDC</shortName>
    </alternativeName>
</protein>
<dbReference type="EMBL" id="AB009676">
    <property type="protein sequence ID" value="BAA83384.1"/>
    <property type="molecule type" value="mRNA"/>
</dbReference>
<dbReference type="EMBL" id="AL929067">
    <property type="status" value="NOT_ANNOTATED_CDS"/>
    <property type="molecule type" value="Genomic_DNA"/>
</dbReference>
<dbReference type="CCDS" id="CCDS25503.1"/>
<dbReference type="RefSeq" id="NP_033743.2">
    <property type="nucleotide sequence ID" value="NM_009613.3"/>
</dbReference>
<dbReference type="SMR" id="Q9R1V4"/>
<dbReference type="BioGRID" id="197961">
    <property type="interactions" value="10"/>
</dbReference>
<dbReference type="FunCoup" id="Q9R1V4">
    <property type="interactions" value="372"/>
</dbReference>
<dbReference type="STRING" id="10090.ENSMUSP00000069466"/>
<dbReference type="MEROPS" id="M12.976"/>
<dbReference type="GlyCosmos" id="Q9R1V4">
    <property type="glycosylation" value="4 sites, No reported glycans"/>
</dbReference>
<dbReference type="GlyGen" id="Q9R1V4">
    <property type="glycosylation" value="5 sites, 2 N-linked glycans (2 sites), 1 O-linked glycan (1 site)"/>
</dbReference>
<dbReference type="iPTMnet" id="Q9R1V4"/>
<dbReference type="PhosphoSitePlus" id="Q9R1V4"/>
<dbReference type="SwissPalm" id="Q9R1V4"/>
<dbReference type="PaxDb" id="10090-ENSMUSP00000069466"/>
<dbReference type="ProteomicsDB" id="285755"/>
<dbReference type="ABCD" id="Q9R1V4">
    <property type="antibodies" value="1 sequenced antibody"/>
</dbReference>
<dbReference type="Antibodypedia" id="29870">
    <property type="antibodies" value="138 antibodies from 24 providers"/>
</dbReference>
<dbReference type="DNASU" id="11488"/>
<dbReference type="Ensembl" id="ENSMUST00000103081.10">
    <property type="protein sequence ID" value="ENSMUSP00000099370.5"/>
    <property type="gene ID" value="ENSMUSG00000020926.17"/>
</dbReference>
<dbReference type="GeneID" id="11488"/>
<dbReference type="KEGG" id="mmu:11488"/>
<dbReference type="UCSC" id="uc007lsi.2">
    <property type="organism name" value="mouse"/>
</dbReference>
<dbReference type="AGR" id="MGI:1098667"/>
<dbReference type="CTD" id="4185"/>
<dbReference type="MGI" id="MGI:1098667">
    <property type="gene designation" value="Adam11"/>
</dbReference>
<dbReference type="VEuPathDB" id="HostDB:ENSMUSG00000020926"/>
<dbReference type="eggNOG" id="KOG3607">
    <property type="taxonomic scope" value="Eukaryota"/>
</dbReference>
<dbReference type="GeneTree" id="ENSGT00940000159790"/>
<dbReference type="HOGENOM" id="CLU_012714_5_2_1"/>
<dbReference type="InParanoid" id="Q9R1V4"/>
<dbReference type="OMA" id="GAETHRY"/>
<dbReference type="OrthoDB" id="5951731at2759"/>
<dbReference type="Reactome" id="R-MMU-5682910">
    <property type="pathway name" value="LGI-ADAM interactions"/>
</dbReference>
<dbReference type="BioGRID-ORCS" id="11488">
    <property type="hits" value="2 hits in 78 CRISPR screens"/>
</dbReference>
<dbReference type="CD-CODE" id="CE726F99">
    <property type="entry name" value="Postsynaptic density"/>
</dbReference>
<dbReference type="PRO" id="PR:Q9R1V4"/>
<dbReference type="Proteomes" id="UP000000589">
    <property type="component" value="Chromosome 11"/>
</dbReference>
<dbReference type="RNAct" id="Q9R1V4">
    <property type="molecule type" value="protein"/>
</dbReference>
<dbReference type="Bgee" id="ENSMUSG00000020926">
    <property type="expression patterns" value="Expressed in cerebellar cortex and 203 other cell types or tissues"/>
</dbReference>
<dbReference type="ExpressionAtlas" id="Q9R1V4">
    <property type="expression patterns" value="baseline and differential"/>
</dbReference>
<dbReference type="GO" id="GO:0030424">
    <property type="term" value="C:axon"/>
    <property type="evidence" value="ECO:0007669"/>
    <property type="project" value="UniProtKB-SubCell"/>
</dbReference>
<dbReference type="GO" id="GO:0043204">
    <property type="term" value="C:perikaryon"/>
    <property type="evidence" value="ECO:0007669"/>
    <property type="project" value="UniProtKB-SubCell"/>
</dbReference>
<dbReference type="GO" id="GO:0042734">
    <property type="term" value="C:presynaptic membrane"/>
    <property type="evidence" value="ECO:0007669"/>
    <property type="project" value="UniProtKB-SubCell"/>
</dbReference>
<dbReference type="GO" id="GO:0004222">
    <property type="term" value="F:metalloendopeptidase activity"/>
    <property type="evidence" value="ECO:0007669"/>
    <property type="project" value="InterPro"/>
</dbReference>
<dbReference type="GO" id="GO:0061367">
    <property type="term" value="P:behavioral response to acetic acid induced pain"/>
    <property type="evidence" value="ECO:0000315"/>
    <property type="project" value="UniProtKB"/>
</dbReference>
<dbReference type="GO" id="GO:0061368">
    <property type="term" value="P:behavioral response to formalin induced pain"/>
    <property type="evidence" value="ECO:0000315"/>
    <property type="project" value="UniProtKB"/>
</dbReference>
<dbReference type="GO" id="GO:0045184">
    <property type="term" value="P:establishment of protein localization"/>
    <property type="evidence" value="ECO:0000315"/>
    <property type="project" value="UniProtKB"/>
</dbReference>
<dbReference type="GO" id="GO:0033555">
    <property type="term" value="P:multicellular organismal response to stress"/>
    <property type="evidence" value="ECO:0000315"/>
    <property type="project" value="UniProtKB"/>
</dbReference>
<dbReference type="GO" id="GO:0006508">
    <property type="term" value="P:proteolysis"/>
    <property type="evidence" value="ECO:0007669"/>
    <property type="project" value="InterPro"/>
</dbReference>
<dbReference type="CDD" id="cd04269">
    <property type="entry name" value="ZnMc_adamalysin_II_like"/>
    <property type="match status" value="1"/>
</dbReference>
<dbReference type="FunFam" id="2.10.25.10:FF:000147">
    <property type="entry name" value="Disintegrin and metalloproteinase domain-containing protein 11"/>
    <property type="match status" value="1"/>
</dbReference>
<dbReference type="FunFam" id="3.40.390.10:FF:000014">
    <property type="entry name" value="disintegrin and metalloproteinase domain-containing protein 11"/>
    <property type="match status" value="1"/>
</dbReference>
<dbReference type="FunFam" id="4.10.70.10:FF:000001">
    <property type="entry name" value="Disintegrin and metalloproteinase domain-containing protein 22"/>
    <property type="match status" value="1"/>
</dbReference>
<dbReference type="Gene3D" id="3.40.390.10">
    <property type="entry name" value="Collagenase (Catalytic Domain)"/>
    <property type="match status" value="1"/>
</dbReference>
<dbReference type="Gene3D" id="4.10.70.10">
    <property type="entry name" value="Disintegrin domain"/>
    <property type="match status" value="1"/>
</dbReference>
<dbReference type="Gene3D" id="2.10.25.10">
    <property type="entry name" value="Laminin"/>
    <property type="match status" value="1"/>
</dbReference>
<dbReference type="InterPro" id="IPR006586">
    <property type="entry name" value="ADAM_Cys-rich"/>
</dbReference>
<dbReference type="InterPro" id="IPR018358">
    <property type="entry name" value="Disintegrin_CS"/>
</dbReference>
<dbReference type="InterPro" id="IPR001762">
    <property type="entry name" value="Disintegrin_dom"/>
</dbReference>
<dbReference type="InterPro" id="IPR036436">
    <property type="entry name" value="Disintegrin_dom_sf"/>
</dbReference>
<dbReference type="InterPro" id="IPR000742">
    <property type="entry name" value="EGF-like_dom"/>
</dbReference>
<dbReference type="InterPro" id="IPR024079">
    <property type="entry name" value="MetalloPept_cat_dom_sf"/>
</dbReference>
<dbReference type="InterPro" id="IPR001590">
    <property type="entry name" value="Peptidase_M12B"/>
</dbReference>
<dbReference type="InterPro" id="IPR002870">
    <property type="entry name" value="Peptidase_M12B_N"/>
</dbReference>
<dbReference type="InterPro" id="IPR034027">
    <property type="entry name" value="Reprolysin_adamalysin"/>
</dbReference>
<dbReference type="PANTHER" id="PTHR11905">
    <property type="entry name" value="ADAM A DISINTEGRIN AND METALLOPROTEASE DOMAIN"/>
    <property type="match status" value="1"/>
</dbReference>
<dbReference type="PANTHER" id="PTHR11905:SF114">
    <property type="entry name" value="DISINTEGRIN AND METALLOPROTEINASE DOMAIN-CONTAINING PROTEIN 11"/>
    <property type="match status" value="1"/>
</dbReference>
<dbReference type="Pfam" id="PF08516">
    <property type="entry name" value="ADAM_CR"/>
    <property type="match status" value="1"/>
</dbReference>
<dbReference type="Pfam" id="PF00200">
    <property type="entry name" value="Disintegrin"/>
    <property type="match status" value="1"/>
</dbReference>
<dbReference type="Pfam" id="PF23106">
    <property type="entry name" value="EGF_Teneurin"/>
    <property type="match status" value="1"/>
</dbReference>
<dbReference type="Pfam" id="PF01562">
    <property type="entry name" value="Pep_M12B_propep"/>
    <property type="match status" value="1"/>
</dbReference>
<dbReference type="Pfam" id="PF01421">
    <property type="entry name" value="Reprolysin"/>
    <property type="match status" value="1"/>
</dbReference>
<dbReference type="PRINTS" id="PR00289">
    <property type="entry name" value="DISINTEGRIN"/>
</dbReference>
<dbReference type="SMART" id="SM00608">
    <property type="entry name" value="ACR"/>
    <property type="match status" value="1"/>
</dbReference>
<dbReference type="SMART" id="SM00050">
    <property type="entry name" value="DISIN"/>
    <property type="match status" value="1"/>
</dbReference>
<dbReference type="SUPFAM" id="SSF57552">
    <property type="entry name" value="Blood coagulation inhibitor (disintegrin)"/>
    <property type="match status" value="1"/>
</dbReference>
<dbReference type="SUPFAM" id="SSF55486">
    <property type="entry name" value="Metalloproteases ('zincins'), catalytic domain"/>
    <property type="match status" value="1"/>
</dbReference>
<dbReference type="PROSITE" id="PS50215">
    <property type="entry name" value="ADAM_MEPRO"/>
    <property type="match status" value="1"/>
</dbReference>
<dbReference type="PROSITE" id="PS00427">
    <property type="entry name" value="DISINTEGRIN_1"/>
    <property type="match status" value="1"/>
</dbReference>
<dbReference type="PROSITE" id="PS50214">
    <property type="entry name" value="DISINTEGRIN_2"/>
    <property type="match status" value="1"/>
</dbReference>
<dbReference type="PROSITE" id="PS00022">
    <property type="entry name" value="EGF_1"/>
    <property type="match status" value="1"/>
</dbReference>
<dbReference type="PROSITE" id="PS50026">
    <property type="entry name" value="EGF_3"/>
    <property type="match status" value="1"/>
</dbReference>
<comment type="function">
    <text evidence="9 10 12">Probable ligand for integrin in the brain. This is a non catalytic metalloprotease-like protein. Required for localization of the potassium channel subunit proteins KCNA1/KV1.1 and KCNA2/KV1.2 at cerebellar cortex basket cell distal terminals, is thereby involved in ephaptic inhibitory synchronization of Purkinje cell firing and response to stress (PubMed:26269648). Plays a role in spatial learning and motor coordination (PubMed:16504143). Involved in the nociceptive pain response to chemical-derived stimulation (PubMed:16729981).</text>
</comment>
<comment type="subunit">
    <text evidence="11 12">Interacts with LGI1 and LGI4 (PubMed:18974846). Interacts with KCNA1/KV1.1, KCNA2/KV1.2, DLG4/PSD-95 and ADAM22 (PubMed:26269648).</text>
</comment>
<comment type="subcellular location">
    <subcellularLocation>
        <location evidence="12">Presynaptic cell membrane</location>
        <topology>Single-pass type I membrane protein</topology>
    </subcellularLocation>
    <subcellularLocation>
        <location evidence="12">Perikaryon</location>
    </subcellularLocation>
    <subcellularLocation>
        <location evidence="12">Cell projection</location>
        <location evidence="12">Axon</location>
    </subcellularLocation>
    <text evidence="12">Localizes to basket cell terminals and pinceaux.</text>
</comment>
<comment type="tissue specificity">
    <text evidence="7 8 12">Abundantly expressed in cerebellar cortex basket cell terminals and pinceaux, weakly expressed in Purkinje cells (at protein level) (PubMed:26269648). Weakly expressed in the heart (PubMed:10433968). Abundantly in expressed in neurons throughout the central nervous system including the telencephalon, diencephalic and brainstem nuclei, cerebellum and spinal cord (PubMed:10433968, PubMed:12088751). Expressed in the peripheral nervous system trigeminal and dorsal root ganglia (PubMed:12088751). Expressed in the ganglion and bipolar cells of the retinae and weakly in the cornea of the eyes (PubMed:12088751). Expressed in the hepatocytes of the parenchyma and hepatic lobules of the liver (PubMed:10433968, PubMed:12088751). Expressed in distinct focal areas in the juxtamedullary cortex of the kidney (PubMed:12088751). Expressed in spermatocytes in the seminiferous tubules of the testes (PubMed:10433968, PubMed:12088751). Expressed in the stratum spinosum of the stratified squamous epithelia of the tongue and esophagus (PubMed:12088751).</text>
</comment>
<comment type="developmental stage">
    <text evidence="8">Abundantly expressed in the neural crest-derived structures with low expression in the neural tube at 10 dpc (PubMed:12088751). Expressed in the dorsal root ganglia from 10 to 17 dpc (PubMed:12088751). Expression in the neural tube increases from 11 dpc to 13dpc, at 13 dpc expression is particularly abundant in the diencephalon, brainstem and spinal cord (PubMed:12088751). Expression increases from 13 dpc to postnatal day 1.5 (P1.5) in the telencephalon, whereas expression in the diencephalic and brainstem decreases over this period (PubMed:12088751). Expressed weakly in the developing heart at 13dpc but not at later developmental stages (PubMed:12088751). Expressed weaky in the kidney from 13dpc through to adulthood (PubMed:12088751). Initially expressed in the retinae at 15 dpc, expression is maintained through to adulthood (PubMed:12088751). Abundantly expressed in brown fat beginning at 17 dpc, expression levels are reduced to a low level at P1.5 (PubMed:12088751).</text>
</comment>
<comment type="domain">
    <text>A conserved motif [AVN[ED]CD] within the disintegrin-like domain could be involved in the binding to the integrin receptor.</text>
</comment>
<comment type="PTM">
    <text evidence="1">The precursor is cleaved by a furin endopeptidase.</text>
</comment>
<comment type="disruption phenotype">
    <text evidence="9 10 12">Morphologically normal, including normal hippocampus and cerebellum morphology (PubMed:16504143). Develop a stress response that includes stationary stance progressing to a high amplitude coarse truncal tremor and ataxic gait when exposed to cold-water swim (PubMed:26269648). Loss of KCNA1/KV1.1 and KCNA2/KV1.2 at cerebellar cortex basket cell distal terminals results in loss of ephaptic inhibitory synchronization of Purkinje cell firing (PubMed:26269648). Impaired spatial learning and motor coordination (PubMed:16504143). Decrease in pain response to chemical stimuli such as subcutaneous injection of formalin or acetic acid (PubMed:16729981).</text>
</comment>
<keyword id="KW-1003">Cell membrane</keyword>
<keyword id="KW-0966">Cell projection</keyword>
<keyword id="KW-0165">Cleavage on pair of basic residues</keyword>
<keyword id="KW-1015">Disulfide bond</keyword>
<keyword id="KW-0245">EGF-like domain</keyword>
<keyword id="KW-0325">Glycoprotein</keyword>
<keyword id="KW-0472">Membrane</keyword>
<keyword id="KW-1185">Reference proteome</keyword>
<keyword id="KW-0732">Signal</keyword>
<keyword id="KW-0770">Synapse</keyword>
<keyword id="KW-0812">Transmembrane</keyword>
<keyword id="KW-1133">Transmembrane helix</keyword>
<accession>Q9R1V4</accession>
<accession>A2AUA8</accession>
<sequence length="773" mass="84134">MRRLRRWAIAALLLLPLLPPPGLGALGPRGALHWRSSAHVGSPESPEGSEVTEPSRLVRQSSGGEVRKPQLDTRVRQDPPRGTPVHLAQVSFVIPAFDSNFTLDLELNHHLLSSQYVERHFSREGTRQHSTGAGDHCYYHGKLRGNPQSFAALSTCQGLHGVFSDGNLTYIVEPKEIAGPWGPPQGPLPHLIYRTPLLPAPLGCREPGCLFAVPAQSALPNWPKLRRKRQVRRGHPTVHSETKYVELIVINDHQLFEQMRQSVVLTSNFAKSVVNLADVIYKEQLNTRIVLVAMETWADGDKIQVQDDLLETLARLMVYRREGLPEPSDATHLFSGRTFQSTSSGAAYVGGICSLSRGGGVNEYGNMGAMAVTLAQTLGQNLGMMWNKHRSSAGDCKCPDIWLGCIMEDTGFYLPRKFSRCSIDEYNQFLQEGGGSCLFNKPLKLLDPPECGNGFVEAGEECDCGSVQECSRAGGNCCKKCTLTHDAMCSDGLCCRRCKYEPRGVSCREAVNECDIAETCTGDSSQCPPNLHKLDGYYCDHEQGRCYGGRCKTRDRQCQALWGHAAADRFCYEKLNVEGTERGNCGRKGSGWVQCSKQDVLCGFLLCVNISGAPRLGDLGGDISSVTFYHQGKELDCRGGHVQLADGSDLSYVEDGTACGPNMLCLDHRCLPASAFNFSTCPGSGERRICSHHGVCSNEGKCICQPDWTGKDCSIHNPLPTSPPTGETERYKGPSGTNIIIGSIAGAVLVAAIVLGGTGWGFKNIRRGRSGGA</sequence>
<evidence type="ECO:0000250" key="1"/>
<evidence type="ECO:0000255" key="2"/>
<evidence type="ECO:0000255" key="3">
    <source>
        <dbReference type="PROSITE-ProRule" id="PRU00068"/>
    </source>
</evidence>
<evidence type="ECO:0000255" key="4">
    <source>
        <dbReference type="PROSITE-ProRule" id="PRU00076"/>
    </source>
</evidence>
<evidence type="ECO:0000255" key="5">
    <source>
        <dbReference type="PROSITE-ProRule" id="PRU00276"/>
    </source>
</evidence>
<evidence type="ECO:0000256" key="6">
    <source>
        <dbReference type="SAM" id="MobiDB-lite"/>
    </source>
</evidence>
<evidence type="ECO:0000269" key="7">
    <source>
    </source>
</evidence>
<evidence type="ECO:0000269" key="8">
    <source>
    </source>
</evidence>
<evidence type="ECO:0000269" key="9">
    <source>
    </source>
</evidence>
<evidence type="ECO:0000269" key="10">
    <source>
    </source>
</evidence>
<evidence type="ECO:0000269" key="11">
    <source>
    </source>
</evidence>
<evidence type="ECO:0000269" key="12">
    <source>
    </source>
</evidence>
<evidence type="ECO:0000305" key="13"/>
<organism>
    <name type="scientific">Mus musculus</name>
    <name type="common">Mouse</name>
    <dbReference type="NCBI Taxonomy" id="10090"/>
    <lineage>
        <taxon>Eukaryota</taxon>
        <taxon>Metazoa</taxon>
        <taxon>Chordata</taxon>
        <taxon>Craniata</taxon>
        <taxon>Vertebrata</taxon>
        <taxon>Euteleostomi</taxon>
        <taxon>Mammalia</taxon>
        <taxon>Eutheria</taxon>
        <taxon>Euarchontoglires</taxon>
        <taxon>Glires</taxon>
        <taxon>Rodentia</taxon>
        <taxon>Myomorpha</taxon>
        <taxon>Muroidea</taxon>
        <taxon>Muridae</taxon>
        <taxon>Murinae</taxon>
        <taxon>Mus</taxon>
        <taxon>Mus</taxon>
    </lineage>
</organism>
<proteinExistence type="evidence at protein level"/>
<reference key="1">
    <citation type="journal article" date="1999" name="Gene">
        <title>Cloning and chromosomal mapping of mouse ADAM11, ADAM22 and ADAM23.</title>
        <authorList>
            <person name="Sagane K."/>
            <person name="Yamazaki K."/>
            <person name="Mizui Y."/>
            <person name="Tanaka I."/>
        </authorList>
    </citation>
    <scope>NUCLEOTIDE SEQUENCE [MRNA]</scope>
    <scope>TISSUE SPECIFICITY</scope>
    <source>
        <tissue>Brain</tissue>
    </source>
</reference>
<reference key="2">
    <citation type="journal article" date="2009" name="PLoS Biol.">
        <title>Lineage-specific biology revealed by a finished genome assembly of the mouse.</title>
        <authorList>
            <person name="Church D.M."/>
            <person name="Goodstadt L."/>
            <person name="Hillier L.W."/>
            <person name="Zody M.C."/>
            <person name="Goldstein S."/>
            <person name="She X."/>
            <person name="Bult C.J."/>
            <person name="Agarwala R."/>
            <person name="Cherry J.L."/>
            <person name="DiCuccio M."/>
            <person name="Hlavina W."/>
            <person name="Kapustin Y."/>
            <person name="Meric P."/>
            <person name="Maglott D."/>
            <person name="Birtle Z."/>
            <person name="Marques A.C."/>
            <person name="Graves T."/>
            <person name="Zhou S."/>
            <person name="Teague B."/>
            <person name="Potamousis K."/>
            <person name="Churas C."/>
            <person name="Place M."/>
            <person name="Herschleb J."/>
            <person name="Runnheim R."/>
            <person name="Forrest D."/>
            <person name="Amos-Landgraf J."/>
            <person name="Schwartz D.C."/>
            <person name="Cheng Z."/>
            <person name="Lindblad-Toh K."/>
            <person name="Eichler E.E."/>
            <person name="Ponting C.P."/>
        </authorList>
    </citation>
    <scope>NUCLEOTIDE SEQUENCE [LARGE SCALE GENOMIC DNA]</scope>
    <source>
        <strain>C57BL/6J</strain>
    </source>
</reference>
<reference key="3">
    <citation type="journal article" date="2002" name="Neuroscience">
        <title>Developmental regulation and neuronal expression of the cellular disintegrin ADAM11 gene in mouse nervous system.</title>
        <authorList>
            <person name="Rybnikova E."/>
            <person name="Kaerkkaeinen I."/>
            <person name="Pelto-Huikko M."/>
            <person name="Huovila A.P."/>
        </authorList>
    </citation>
    <scope>TISSUE SPECIFICITY</scope>
    <scope>DEVELOPMENTAL STAGE</scope>
</reference>
<reference key="4">
    <citation type="journal article" date="2006" name="BMC Neurosci.">
        <title>Deficits in spatial learning and motor coordination in ADAM11-deficient mice.</title>
        <authorList>
            <person name="Takahashi E."/>
            <person name="Sagane K."/>
            <person name="Oki T."/>
            <person name="Yamazaki K."/>
            <person name="Nagasu T."/>
            <person name="Kuromitsu J."/>
        </authorList>
    </citation>
    <scope>FUNCTION</scope>
    <scope>DISRUPTION PHENOTYPE</scope>
</reference>
<reference key="5">
    <citation type="journal article" date="2006" name="Brain Res.">
        <title>Altered nociceptive response in ADAM11-deficient mice.</title>
        <authorList>
            <person name="Takahashi E."/>
            <person name="Sagane K."/>
            <person name="Nagasu T."/>
            <person name="Kuromitsu J."/>
        </authorList>
    </citation>
    <scope>FUNCTION</scope>
    <scope>DISRUPTION PHENOTYPE</scope>
</reference>
<reference key="6">
    <citation type="journal article" date="2008" name="Int. J. Biol. Sci.">
        <title>LGI1 and LGI4 bind to ADAM22, ADAM23 and ADAM11.</title>
        <authorList>
            <person name="Sagane K."/>
            <person name="Ishihama Y."/>
            <person name="Sugimoto H."/>
        </authorList>
    </citation>
    <scope>INTERACTION WITH LGI1 AND LGI4</scope>
</reference>
<reference key="7">
    <citation type="journal article" date="2015" name="J. Neurosci.">
        <title>Selective Loss of Presynaptic Potassium Channel Clusters at the Cerebellar Basket Cell Terminal Pinceau in Adam11 Mutants Reveals Their Role in Ephaptic Control of Purkinje Cell Firing.</title>
        <authorList>
            <person name="Kole M.J."/>
            <person name="Qian J."/>
            <person name="Waase M.P."/>
            <person name="Klassen T.L."/>
            <person name="Chen T.T."/>
            <person name="Augustine G.J."/>
            <person name="Noebels J.L."/>
        </authorList>
    </citation>
    <scope>FUNCTION</scope>
    <scope>INTERACTION WITH KCNA1; KCNA2; DLG4 AND ADAM22</scope>
    <scope>SUBCELLULAR LOCATION</scope>
    <scope>TISSUE SPECIFICITY</scope>
    <scope>DISRUPTION PHENOTYPE</scope>
</reference>
<feature type="signal peptide" evidence="2">
    <location>
        <begin position="1"/>
        <end position="24"/>
    </location>
</feature>
<feature type="propeptide" id="PRO_0000029076" evidence="1">
    <location>
        <begin position="25"/>
        <end position="229"/>
    </location>
</feature>
<feature type="chain" id="PRO_0000029077" description="Disintegrin and metalloproteinase domain-containing protein 11">
    <location>
        <begin position="230"/>
        <end position="773"/>
    </location>
</feature>
<feature type="topological domain" description="Extracellular" evidence="2">
    <location>
        <begin position="230"/>
        <end position="738"/>
    </location>
</feature>
<feature type="transmembrane region" description="Helical" evidence="2">
    <location>
        <begin position="739"/>
        <end position="759"/>
    </location>
</feature>
<feature type="topological domain" description="Cytoplasmic" evidence="2">
    <location>
        <begin position="760"/>
        <end position="773"/>
    </location>
</feature>
<feature type="domain" description="Peptidase M12B" evidence="5">
    <location>
        <begin position="243"/>
        <end position="442"/>
    </location>
</feature>
<feature type="domain" description="Disintegrin" evidence="3">
    <location>
        <begin position="448"/>
        <end position="535"/>
    </location>
</feature>
<feature type="domain" description="EGF-like" evidence="4">
    <location>
        <begin position="681"/>
        <end position="713"/>
    </location>
</feature>
<feature type="region of interest" description="Disordered" evidence="6">
    <location>
        <begin position="36"/>
        <end position="82"/>
    </location>
</feature>
<feature type="region of interest" description="Required for localization to cerebellar cortex basket cell terminals. Also required for localization of KCNA1, KCNA2, DLG4 and ADAM22 to cerebellar cortex basket cell terminal perisomatic axons and pinceaux" evidence="12">
    <location>
        <begin position="336"/>
        <end position="773"/>
    </location>
</feature>
<feature type="compositionally biased region" description="Basic and acidic residues" evidence="6">
    <location>
        <begin position="65"/>
        <end position="79"/>
    </location>
</feature>
<feature type="glycosylation site" description="N-linked (GlcNAc...) asparagine" evidence="2">
    <location>
        <position position="100"/>
    </location>
</feature>
<feature type="glycosylation site" description="N-linked (GlcNAc...) asparagine" evidence="2">
    <location>
        <position position="167"/>
    </location>
</feature>
<feature type="glycosylation site" description="N-linked (GlcNAc...) asparagine" evidence="2">
    <location>
        <position position="609"/>
    </location>
</feature>
<feature type="glycosylation site" description="N-linked (GlcNAc...) asparagine" evidence="2">
    <location>
        <position position="677"/>
    </location>
</feature>
<feature type="disulfide bond" evidence="1">
    <location>
        <begin position="353"/>
        <end position="437"/>
    </location>
</feature>
<feature type="disulfide bond" evidence="1">
    <location>
        <begin position="396"/>
        <end position="421"/>
    </location>
</feature>
<feature type="disulfide bond" evidence="1">
    <location>
        <begin position="398"/>
        <end position="405"/>
    </location>
</feature>
<feature type="disulfide bond" evidence="1">
    <location>
        <begin position="507"/>
        <end position="527"/>
    </location>
</feature>
<feature type="disulfide bond" evidence="1">
    <location>
        <begin position="681"/>
        <end position="696"/>
    </location>
</feature>
<feature type="disulfide bond" evidence="1">
    <location>
        <begin position="690"/>
        <end position="702"/>
    </location>
</feature>
<feature type="disulfide bond" evidence="1">
    <location>
        <begin position="704"/>
        <end position="713"/>
    </location>
</feature>
<feature type="sequence conflict" description="In Ref. 1; BAA83384." evidence="13" ref="1">
    <original>W</original>
    <variation>R</variation>
    <location>
        <position position="181"/>
    </location>
</feature>
<feature type="sequence conflict" description="In Ref. 1; BAA83384." evidence="13" ref="1">
    <original>A</original>
    <variation>T</variation>
    <location>
        <position position="218"/>
    </location>
</feature>
<feature type="sequence conflict" description="In Ref. 1; BAA83384." evidence="13" ref="1">
    <original>Q</original>
    <variation>K</variation>
    <location>
        <position position="340"/>
    </location>
</feature>